<feature type="chain" id="PRO_0000328530" description="SKI/DACH domain-containing protein 1">
    <location>
        <begin position="1"/>
        <end position="822"/>
    </location>
</feature>
<feature type="region of interest" description="Disordered" evidence="2">
    <location>
        <begin position="245"/>
        <end position="370"/>
    </location>
</feature>
<feature type="region of interest" description="Disordered" evidence="2">
    <location>
        <begin position="658"/>
        <end position="677"/>
    </location>
</feature>
<feature type="region of interest" description="Disordered" evidence="2">
    <location>
        <begin position="706"/>
        <end position="732"/>
    </location>
</feature>
<feature type="compositionally biased region" description="Basic residues" evidence="2">
    <location>
        <begin position="245"/>
        <end position="261"/>
    </location>
</feature>
<feature type="compositionally biased region" description="Low complexity" evidence="2">
    <location>
        <begin position="278"/>
        <end position="318"/>
    </location>
</feature>
<feature type="compositionally biased region" description="Acidic residues" evidence="2">
    <location>
        <begin position="319"/>
        <end position="338"/>
    </location>
</feature>
<feature type="compositionally biased region" description="Polar residues" evidence="2">
    <location>
        <begin position="660"/>
        <end position="675"/>
    </location>
</feature>
<feature type="cross-link" description="Glycyl lysine isopeptide (Lys-Gly) (interchain with G-Cter in SUMO2)" evidence="1">
    <location>
        <position position="602"/>
    </location>
</feature>
<feature type="sequence conflict" description="In Ref. 3; BAB28505." evidence="3" ref="3">
    <original>R</original>
    <variation>K</variation>
    <location>
        <position position="692"/>
    </location>
</feature>
<proteinExistence type="evidence at transcript level"/>
<comment type="similarity">
    <text evidence="3">Belongs to the DACH/dachshund family.</text>
</comment>
<comment type="sequence caution" evidence="3">
    <conflict type="erroneous gene model prediction">
        <sequence resource="EMBL-CDS" id="CAO78132"/>
    </conflict>
</comment>
<comment type="sequence caution" evidence="3">
    <conflict type="erroneous gene model prediction">
        <sequence resource="EMBL-CDS" id="CAO78133"/>
    </conflict>
</comment>
<reference key="1">
    <citation type="journal article" date="2009" name="PLoS Biol.">
        <title>Lineage-specific biology revealed by a finished genome assembly of the mouse.</title>
        <authorList>
            <person name="Church D.M."/>
            <person name="Goodstadt L."/>
            <person name="Hillier L.W."/>
            <person name="Zody M.C."/>
            <person name="Goldstein S."/>
            <person name="She X."/>
            <person name="Bult C.J."/>
            <person name="Agarwala R."/>
            <person name="Cherry J.L."/>
            <person name="DiCuccio M."/>
            <person name="Hlavina W."/>
            <person name="Kapustin Y."/>
            <person name="Meric P."/>
            <person name="Maglott D."/>
            <person name="Birtle Z."/>
            <person name="Marques A.C."/>
            <person name="Graves T."/>
            <person name="Zhou S."/>
            <person name="Teague B."/>
            <person name="Potamousis K."/>
            <person name="Churas C."/>
            <person name="Place M."/>
            <person name="Herschleb J."/>
            <person name="Runnheim R."/>
            <person name="Forrest D."/>
            <person name="Amos-Landgraf J."/>
            <person name="Schwartz D.C."/>
            <person name="Cheng Z."/>
            <person name="Lindblad-Toh K."/>
            <person name="Eichler E.E."/>
            <person name="Ponting C.P."/>
        </authorList>
    </citation>
    <scope>NUCLEOTIDE SEQUENCE [LARGE SCALE GENOMIC DNA]</scope>
    <source>
        <strain>C57BL/6J</strain>
    </source>
</reference>
<reference key="2">
    <citation type="journal article" date="2004" name="Genome Res.">
        <title>The status, quality, and expansion of the NIH full-length cDNA project: the Mammalian Gene Collection (MGC).</title>
        <authorList>
            <consortium name="The MGC Project Team"/>
        </authorList>
    </citation>
    <scope>NUCLEOTIDE SEQUENCE [LARGE SCALE MRNA]</scope>
    <source>
        <tissue>Embryo</tissue>
    </source>
</reference>
<reference key="3">
    <citation type="journal article" date="2005" name="Science">
        <title>The transcriptional landscape of the mammalian genome.</title>
        <authorList>
            <person name="Carninci P."/>
            <person name="Kasukawa T."/>
            <person name="Katayama S."/>
            <person name="Gough J."/>
            <person name="Frith M.C."/>
            <person name="Maeda N."/>
            <person name="Oyama R."/>
            <person name="Ravasi T."/>
            <person name="Lenhard B."/>
            <person name="Wells C."/>
            <person name="Kodzius R."/>
            <person name="Shimokawa K."/>
            <person name="Bajic V.B."/>
            <person name="Brenner S.E."/>
            <person name="Batalov S."/>
            <person name="Forrest A.R."/>
            <person name="Zavolan M."/>
            <person name="Davis M.J."/>
            <person name="Wilming L.G."/>
            <person name="Aidinis V."/>
            <person name="Allen J.E."/>
            <person name="Ambesi-Impiombato A."/>
            <person name="Apweiler R."/>
            <person name="Aturaliya R.N."/>
            <person name="Bailey T.L."/>
            <person name="Bansal M."/>
            <person name="Baxter L."/>
            <person name="Beisel K.W."/>
            <person name="Bersano T."/>
            <person name="Bono H."/>
            <person name="Chalk A.M."/>
            <person name="Chiu K.P."/>
            <person name="Choudhary V."/>
            <person name="Christoffels A."/>
            <person name="Clutterbuck D.R."/>
            <person name="Crowe M.L."/>
            <person name="Dalla E."/>
            <person name="Dalrymple B.P."/>
            <person name="de Bono B."/>
            <person name="Della Gatta G."/>
            <person name="di Bernardo D."/>
            <person name="Down T."/>
            <person name="Engstrom P."/>
            <person name="Fagiolini M."/>
            <person name="Faulkner G."/>
            <person name="Fletcher C.F."/>
            <person name="Fukushima T."/>
            <person name="Furuno M."/>
            <person name="Futaki S."/>
            <person name="Gariboldi M."/>
            <person name="Georgii-Hemming P."/>
            <person name="Gingeras T.R."/>
            <person name="Gojobori T."/>
            <person name="Green R.E."/>
            <person name="Gustincich S."/>
            <person name="Harbers M."/>
            <person name="Hayashi Y."/>
            <person name="Hensch T.K."/>
            <person name="Hirokawa N."/>
            <person name="Hill D."/>
            <person name="Huminiecki L."/>
            <person name="Iacono M."/>
            <person name="Ikeo K."/>
            <person name="Iwama A."/>
            <person name="Ishikawa T."/>
            <person name="Jakt M."/>
            <person name="Kanapin A."/>
            <person name="Katoh M."/>
            <person name="Kawasawa Y."/>
            <person name="Kelso J."/>
            <person name="Kitamura H."/>
            <person name="Kitano H."/>
            <person name="Kollias G."/>
            <person name="Krishnan S.P."/>
            <person name="Kruger A."/>
            <person name="Kummerfeld S.K."/>
            <person name="Kurochkin I.V."/>
            <person name="Lareau L.F."/>
            <person name="Lazarevic D."/>
            <person name="Lipovich L."/>
            <person name="Liu J."/>
            <person name="Liuni S."/>
            <person name="McWilliam S."/>
            <person name="Madan Babu M."/>
            <person name="Madera M."/>
            <person name="Marchionni L."/>
            <person name="Matsuda H."/>
            <person name="Matsuzawa S."/>
            <person name="Miki H."/>
            <person name="Mignone F."/>
            <person name="Miyake S."/>
            <person name="Morris K."/>
            <person name="Mottagui-Tabar S."/>
            <person name="Mulder N."/>
            <person name="Nakano N."/>
            <person name="Nakauchi H."/>
            <person name="Ng P."/>
            <person name="Nilsson R."/>
            <person name="Nishiguchi S."/>
            <person name="Nishikawa S."/>
            <person name="Nori F."/>
            <person name="Ohara O."/>
            <person name="Okazaki Y."/>
            <person name="Orlando V."/>
            <person name="Pang K.C."/>
            <person name="Pavan W.J."/>
            <person name="Pavesi G."/>
            <person name="Pesole G."/>
            <person name="Petrovsky N."/>
            <person name="Piazza S."/>
            <person name="Reed J."/>
            <person name="Reid J.F."/>
            <person name="Ring B.Z."/>
            <person name="Ringwald M."/>
            <person name="Rost B."/>
            <person name="Ruan Y."/>
            <person name="Salzberg S.L."/>
            <person name="Sandelin A."/>
            <person name="Schneider C."/>
            <person name="Schoenbach C."/>
            <person name="Sekiguchi K."/>
            <person name="Semple C.A."/>
            <person name="Seno S."/>
            <person name="Sessa L."/>
            <person name="Sheng Y."/>
            <person name="Shibata Y."/>
            <person name="Shimada H."/>
            <person name="Shimada K."/>
            <person name="Silva D."/>
            <person name="Sinclair B."/>
            <person name="Sperling S."/>
            <person name="Stupka E."/>
            <person name="Sugiura K."/>
            <person name="Sultana R."/>
            <person name="Takenaka Y."/>
            <person name="Taki K."/>
            <person name="Tammoja K."/>
            <person name="Tan S.L."/>
            <person name="Tang S."/>
            <person name="Taylor M.S."/>
            <person name="Tegner J."/>
            <person name="Teichmann S.A."/>
            <person name="Ueda H.R."/>
            <person name="van Nimwegen E."/>
            <person name="Verardo R."/>
            <person name="Wei C.L."/>
            <person name="Yagi K."/>
            <person name="Yamanishi H."/>
            <person name="Zabarovsky E."/>
            <person name="Zhu S."/>
            <person name="Zimmer A."/>
            <person name="Hide W."/>
            <person name="Bult C."/>
            <person name="Grimmond S.M."/>
            <person name="Teasdale R.D."/>
            <person name="Liu E.T."/>
            <person name="Brusic V."/>
            <person name="Quackenbush J."/>
            <person name="Wahlestedt C."/>
            <person name="Mattick J.S."/>
            <person name="Hume D.A."/>
            <person name="Kai C."/>
            <person name="Sasaki D."/>
            <person name="Tomaru Y."/>
            <person name="Fukuda S."/>
            <person name="Kanamori-Katayama M."/>
            <person name="Suzuki M."/>
            <person name="Aoki J."/>
            <person name="Arakawa T."/>
            <person name="Iida J."/>
            <person name="Imamura K."/>
            <person name="Itoh M."/>
            <person name="Kato T."/>
            <person name="Kawaji H."/>
            <person name="Kawagashira N."/>
            <person name="Kawashima T."/>
            <person name="Kojima M."/>
            <person name="Kondo S."/>
            <person name="Konno H."/>
            <person name="Nakano K."/>
            <person name="Ninomiya N."/>
            <person name="Nishio T."/>
            <person name="Okada M."/>
            <person name="Plessy C."/>
            <person name="Shibata K."/>
            <person name="Shiraki T."/>
            <person name="Suzuki S."/>
            <person name="Tagami M."/>
            <person name="Waki K."/>
            <person name="Watahiki A."/>
            <person name="Okamura-Oho Y."/>
            <person name="Suzuki H."/>
            <person name="Kawai J."/>
            <person name="Hayashizaki Y."/>
        </authorList>
    </citation>
    <scope>NUCLEOTIDE SEQUENCE [LARGE SCALE MRNA] OF 692-822</scope>
    <source>
        <strain>C57BL/6J</strain>
    </source>
</reference>
<gene>
    <name type="primary">Skida1</name>
</gene>
<sequence length="822" mass="90309">MGDLKSGFEEVDGVRLGYLIIKGKQMFALSQVFTDLLKNIPRTTVHKRMDHLKVKKHHCDLEELRKLKAINSIAFHAAKCTLISREDVEALYTSCKTERVLKTKRRRVGRALATKAPPPERAAAASPRPAFWKDKHQLWRGLSGAARPLPISAQSQRPGAAAARPAAHLPQIFSKYPGSHYPEIVRSPCKSSLNYETAQLQGNYVAFHSDPAYFRSLLCSKHPAAAGATCLERFHLVNSFCPPPHHHHHHHHHHHHHHHRAQQPTPSHHPSHHHRPQPHLGSFPESCSSDSESSSYSDHAANDSDFGSSLSSSSNSVSSEEEEEEGEEEEEEEEEEEGGSGASDSSEISSEEEDSSTESDSSSGSSQVSVQSIRFRRTSFCKPPSVQAQANFLYHLASAAAATKPAAFEDAGRLPDLKSSVKAESPEEWSLQSWAPKGTPVYCPASLGSCFPEIRNDRVSEITFPHSEISSTVKRTDLTINCHAEGASSPSPKTNNVFPQQRILREARKCLQATPTTHCAENSTIAARFLNNDSCGTTANSGKDSKIPHCPEFATDLPSLQSDPRVDTATAAAAAAAATKAESLCTGTGDKTLPFLHNIKIKVEDSSANEEYEPELITNKLKWECNDAEGEFYNMTEKKEEDALVPTAKEGFACPEKETPSLNPLAQSQGLSCTLGSPKPEDGEYKFGARVRKNYRTLVLGKRPVLQTPPVKPNLKSARSPRPTGKTETHEGTLDDFTVLNRRKKVASNVASAVKRPFNFMANFPCPPSLIIGKDGDLWPAYSLNTTKDSQPPHKAHPIWKWQLGGSAIPLPPSHKFRKFNS</sequence>
<evidence type="ECO:0000250" key="1">
    <source>
        <dbReference type="UniProtKB" id="Q1XH10"/>
    </source>
</evidence>
<evidence type="ECO:0000256" key="2">
    <source>
        <dbReference type="SAM" id="MobiDB-lite"/>
    </source>
</evidence>
<evidence type="ECO:0000305" key="3"/>
<dbReference type="EMBL" id="AL928589">
    <property type="protein sequence ID" value="CAM21798.1"/>
    <property type="molecule type" value="Genomic_DNA"/>
</dbReference>
<dbReference type="EMBL" id="AL928589">
    <property type="protein sequence ID" value="CAO78132.1"/>
    <property type="status" value="ALT_SEQ"/>
    <property type="molecule type" value="Genomic_DNA"/>
</dbReference>
<dbReference type="EMBL" id="AL928589">
    <property type="protein sequence ID" value="CAO78133.1"/>
    <property type="status" value="ALT_SEQ"/>
    <property type="molecule type" value="Genomic_DNA"/>
</dbReference>
<dbReference type="EMBL" id="BC050860">
    <property type="protein sequence ID" value="AAH50860.1"/>
    <property type="molecule type" value="mRNA"/>
</dbReference>
<dbReference type="EMBL" id="AK012843">
    <property type="protein sequence ID" value="BAB28505.1"/>
    <property type="molecule type" value="mRNA"/>
</dbReference>
<dbReference type="RefSeq" id="NP_082593.2">
    <property type="nucleotide sequence ID" value="NM_028317.2"/>
</dbReference>
<dbReference type="SMR" id="Q80YR3"/>
<dbReference type="BioGRID" id="215504">
    <property type="interactions" value="1"/>
</dbReference>
<dbReference type="FunCoup" id="Q80YR3">
    <property type="interactions" value="62"/>
</dbReference>
<dbReference type="STRING" id="10090.ENSMUSP00000088982"/>
<dbReference type="GlyGen" id="Q80YR3">
    <property type="glycosylation" value="1 site"/>
</dbReference>
<dbReference type="iPTMnet" id="Q80YR3"/>
<dbReference type="PhosphoSitePlus" id="Q80YR3"/>
<dbReference type="PaxDb" id="10090-ENSMUSP00000088982"/>
<dbReference type="Antibodypedia" id="50910">
    <property type="antibodies" value="65 antibodies from 12 providers"/>
</dbReference>
<dbReference type="GeneID" id="72668"/>
<dbReference type="KEGG" id="mmu:72668"/>
<dbReference type="AGR" id="MGI:1919918"/>
<dbReference type="CTD" id="387640"/>
<dbReference type="MGI" id="MGI:1919918">
    <property type="gene designation" value="Skida1"/>
</dbReference>
<dbReference type="VEuPathDB" id="HostDB:ENSMUSG00000054074"/>
<dbReference type="eggNOG" id="KOG3915">
    <property type="taxonomic scope" value="Eukaryota"/>
</dbReference>
<dbReference type="HOGENOM" id="CLU_021969_0_0_1"/>
<dbReference type="InParanoid" id="Q80YR3"/>
<dbReference type="OrthoDB" id="10014624at2759"/>
<dbReference type="PhylomeDB" id="Q80YR3"/>
<dbReference type="BioGRID-ORCS" id="72668">
    <property type="hits" value="1 hit in 60 CRISPR screens"/>
</dbReference>
<dbReference type="ChiTaRS" id="Skida1">
    <property type="organism name" value="mouse"/>
</dbReference>
<dbReference type="PRO" id="PR:Q80YR3"/>
<dbReference type="Proteomes" id="UP000000589">
    <property type="component" value="Chromosome 2"/>
</dbReference>
<dbReference type="RNAct" id="Q80YR3">
    <property type="molecule type" value="protein"/>
</dbReference>
<dbReference type="Bgee" id="ENSMUSG00000054074">
    <property type="expression patterns" value="Expressed in retinal neural layer and 74 other cell types or tissues"/>
</dbReference>
<dbReference type="ExpressionAtlas" id="Q80YR3">
    <property type="expression patterns" value="baseline and differential"/>
</dbReference>
<dbReference type="CDD" id="cd21082">
    <property type="entry name" value="DHD_SKIDA1"/>
    <property type="match status" value="1"/>
</dbReference>
<dbReference type="Gene3D" id="3.10.260.20">
    <property type="entry name" value="Ski"/>
    <property type="match status" value="1"/>
</dbReference>
<dbReference type="InterPro" id="IPR009061">
    <property type="entry name" value="DNA-bd_dom_put_sf"/>
</dbReference>
<dbReference type="InterPro" id="IPR052119">
    <property type="entry name" value="ElonginBC-PRC2_ViralRestrict"/>
</dbReference>
<dbReference type="InterPro" id="IPR027971">
    <property type="entry name" value="EPOP"/>
</dbReference>
<dbReference type="InterPro" id="IPR003380">
    <property type="entry name" value="SKI/SNO/DAC"/>
</dbReference>
<dbReference type="InterPro" id="IPR037000">
    <property type="entry name" value="Ski_DNA-bd_sf"/>
</dbReference>
<dbReference type="PANTHER" id="PTHR23187">
    <property type="entry name" value="FLJ44216 PROTEIN-RELATED"/>
    <property type="match status" value="1"/>
</dbReference>
<dbReference type="PANTHER" id="PTHR23187:SF2">
    <property type="entry name" value="SKI_DACH DOMAIN-CONTAINING PROTEIN 1"/>
    <property type="match status" value="1"/>
</dbReference>
<dbReference type="Pfam" id="PF15223">
    <property type="entry name" value="EPOP"/>
    <property type="match status" value="1"/>
</dbReference>
<dbReference type="Pfam" id="PF02437">
    <property type="entry name" value="Ski_Sno_DHD"/>
    <property type="match status" value="1"/>
</dbReference>
<dbReference type="SUPFAM" id="SSF46955">
    <property type="entry name" value="Putative DNA-binding domain"/>
    <property type="match status" value="1"/>
</dbReference>
<accession>Q80YR3</accession>
<accession>A6PWY1</accession>
<accession>A6PWY2</accession>
<accession>Q9CSH2</accession>
<name>SKDA1_MOUSE</name>
<protein>
    <recommendedName>
        <fullName>SKI/DACH domain-containing protein 1</fullName>
    </recommendedName>
    <alternativeName>
        <fullName>Protein DLN-1</fullName>
    </alternativeName>
</protein>
<keyword id="KW-1017">Isopeptide bond</keyword>
<keyword id="KW-1185">Reference proteome</keyword>
<keyword id="KW-0832">Ubl conjugation</keyword>
<organism>
    <name type="scientific">Mus musculus</name>
    <name type="common">Mouse</name>
    <dbReference type="NCBI Taxonomy" id="10090"/>
    <lineage>
        <taxon>Eukaryota</taxon>
        <taxon>Metazoa</taxon>
        <taxon>Chordata</taxon>
        <taxon>Craniata</taxon>
        <taxon>Vertebrata</taxon>
        <taxon>Euteleostomi</taxon>
        <taxon>Mammalia</taxon>
        <taxon>Eutheria</taxon>
        <taxon>Euarchontoglires</taxon>
        <taxon>Glires</taxon>
        <taxon>Rodentia</taxon>
        <taxon>Myomorpha</taxon>
        <taxon>Muroidea</taxon>
        <taxon>Muridae</taxon>
        <taxon>Murinae</taxon>
        <taxon>Mus</taxon>
        <taxon>Mus</taxon>
    </lineage>
</organism>